<name>MOGT1_XENLA</name>
<gene>
    <name type="primary">mogat1</name>
</gene>
<keyword id="KW-0012">Acyltransferase</keyword>
<keyword id="KW-0256">Endoplasmic reticulum</keyword>
<keyword id="KW-0319">Glycerol metabolism</keyword>
<keyword id="KW-0325">Glycoprotein</keyword>
<keyword id="KW-0444">Lipid biosynthesis</keyword>
<keyword id="KW-0443">Lipid metabolism</keyword>
<keyword id="KW-0472">Membrane</keyword>
<keyword id="KW-1185">Reference proteome</keyword>
<keyword id="KW-0808">Transferase</keyword>
<keyword id="KW-0812">Transmembrane</keyword>
<keyword id="KW-1133">Transmembrane helix</keyword>
<protein>
    <recommendedName>
        <fullName>2-acylglycerol O-acyltransferase 1</fullName>
        <ecNumber evidence="1">2.3.1.22</ecNumber>
    </recommendedName>
    <alternativeName>
        <fullName>Acyl-CoA:monoacylglycerol acyltransferase 1</fullName>
        <shortName>MGAT1</shortName>
    </alternativeName>
    <alternativeName>
        <fullName>Monoacylglycerol O-acyltransferase 1</fullName>
    </alternativeName>
</protein>
<evidence type="ECO:0000250" key="1">
    <source>
        <dbReference type="UniProtKB" id="Q91ZV4"/>
    </source>
</evidence>
<evidence type="ECO:0000255" key="2"/>
<evidence type="ECO:0000305" key="3"/>
<sequence>MKVEFAPLNIPLARRLQTTAVFQWVFSFLLLAQCCIGIFICLVLARVWLLLALYVLWLYLDWETPQAGGRRWEWVRNWPVWKYFKDYFPIRLVKTCDLDPQHNYIMGFHPHGVLVAGAFGNFCTNYTGFKELFPGLTPYLHILPFWFRCPFFREYIMSVGLVSASKKSVNHVLSKEDGGNVSIIVTGGAEESLDAHPGSLTLNILKRKGFIKVALKRGAYLVPVFSFGENELFQQVSNPKGSLLRCVQERLQRIMGLAMPLFHARGIFQYSFGLMPYRMPIHTVVGRPIPVKETSHPTQEEIESLHQQYLGALQELFEEHKKRYGIPEHESLIFI</sequence>
<comment type="function">
    <text evidence="1">Involved in glycerolipid synthesis and lipid metabolism. Catalyzes the formation of diacylglycerol, the precursor of triacylglycerol, by transferring the acyl chain of a fatty acyl-CoA to a monoacylglycerol, mainly at the sn-1 or sn-3 positions. It uses both sn-2-monoacylglycerol (2-acylglycerol) and sn-1-monoacylglycerol (1-acyl-sn-glycerol) equally well as substrates, and uses sn-3-monoacylglycerol (3-acyl-sn-glycerol) with lower efficiency.</text>
</comment>
<comment type="catalytic activity">
    <reaction evidence="1">
        <text>a 2-acylglycerol + an acyl-CoA = a 1,2-diacylglycerol + CoA</text>
        <dbReference type="Rhea" id="RHEA:16741"/>
        <dbReference type="ChEBI" id="CHEBI:17389"/>
        <dbReference type="ChEBI" id="CHEBI:49172"/>
        <dbReference type="ChEBI" id="CHEBI:57287"/>
        <dbReference type="ChEBI" id="CHEBI:58342"/>
        <dbReference type="EC" id="2.3.1.22"/>
    </reaction>
    <physiologicalReaction direction="left-to-right" evidence="1">
        <dbReference type="Rhea" id="RHEA:16742"/>
    </physiologicalReaction>
</comment>
<comment type="catalytic activity">
    <reaction evidence="1">
        <text>a 2-acylglycerol + an acyl-CoA = a 1,2-diacyl-sn-glycerol + CoA</text>
        <dbReference type="Rhea" id="RHEA:32947"/>
        <dbReference type="ChEBI" id="CHEBI:17389"/>
        <dbReference type="ChEBI" id="CHEBI:17815"/>
        <dbReference type="ChEBI" id="CHEBI:57287"/>
        <dbReference type="ChEBI" id="CHEBI:58342"/>
    </reaction>
    <physiologicalReaction direction="left-to-right" evidence="1">
        <dbReference type="Rhea" id="RHEA:32948"/>
    </physiologicalReaction>
</comment>
<comment type="catalytic activity">
    <reaction evidence="1">
        <text>a 2-acylglycerol + an acyl-CoA = a 2,3-diacyl-sn-glycerol + CoA</text>
        <dbReference type="Rhea" id="RHEA:38467"/>
        <dbReference type="ChEBI" id="CHEBI:17389"/>
        <dbReference type="ChEBI" id="CHEBI:57287"/>
        <dbReference type="ChEBI" id="CHEBI:58342"/>
        <dbReference type="ChEBI" id="CHEBI:75524"/>
    </reaction>
    <physiologicalReaction direction="left-to-right" evidence="1">
        <dbReference type="Rhea" id="RHEA:38468"/>
    </physiologicalReaction>
</comment>
<comment type="catalytic activity">
    <reaction evidence="1">
        <text>a 1-acylglycerol + an acyl-CoA = a 1,2-diacylglycerol + CoA</text>
        <dbReference type="Rhea" id="RHEA:39943"/>
        <dbReference type="ChEBI" id="CHEBI:35759"/>
        <dbReference type="ChEBI" id="CHEBI:49172"/>
        <dbReference type="ChEBI" id="CHEBI:57287"/>
        <dbReference type="ChEBI" id="CHEBI:58342"/>
    </reaction>
    <physiologicalReaction direction="left-to-right" evidence="1">
        <dbReference type="Rhea" id="RHEA:39944"/>
    </physiologicalReaction>
</comment>
<comment type="catalytic activity">
    <reaction evidence="1">
        <text>a 1-acylglycerol + an acyl-CoA = a 1,3-diacylglycerol + CoA</text>
        <dbReference type="Rhea" id="RHEA:77571"/>
        <dbReference type="ChEBI" id="CHEBI:35759"/>
        <dbReference type="ChEBI" id="CHEBI:47777"/>
        <dbReference type="ChEBI" id="CHEBI:57287"/>
        <dbReference type="ChEBI" id="CHEBI:58342"/>
    </reaction>
    <physiologicalReaction direction="left-to-right" evidence="1">
        <dbReference type="Rhea" id="RHEA:77572"/>
    </physiologicalReaction>
</comment>
<comment type="catalytic activity">
    <reaction evidence="1">
        <text>a 1-acyl-sn-glycerol + an acyl-CoA = a 1,3-diacyl-sn-glycerol + CoA</text>
        <dbReference type="Rhea" id="RHEA:77559"/>
        <dbReference type="ChEBI" id="CHEBI:57287"/>
        <dbReference type="ChEBI" id="CHEBI:58342"/>
        <dbReference type="ChEBI" id="CHEBI:64683"/>
        <dbReference type="ChEBI" id="CHEBI:77272"/>
    </reaction>
    <physiologicalReaction direction="left-to-right" evidence="1">
        <dbReference type="Rhea" id="RHEA:77560"/>
    </physiologicalReaction>
</comment>
<comment type="catalytic activity">
    <reaction evidence="1">
        <text>a 3-acyl-sn-glycerol + an acyl-CoA = a 1,3-diacyl-sn-glycerol + CoA</text>
        <dbReference type="Rhea" id="RHEA:77555"/>
        <dbReference type="ChEBI" id="CHEBI:57287"/>
        <dbReference type="ChEBI" id="CHEBI:58342"/>
        <dbReference type="ChEBI" id="CHEBI:64760"/>
        <dbReference type="ChEBI" id="CHEBI:77272"/>
    </reaction>
    <physiologicalReaction direction="left-to-right" evidence="1">
        <dbReference type="Rhea" id="RHEA:77556"/>
    </physiologicalReaction>
</comment>
<comment type="pathway">
    <text evidence="1">Glycerolipid metabolism; triacylglycerol biosynthesis.</text>
</comment>
<comment type="subcellular location">
    <subcellularLocation>
        <location evidence="1">Endoplasmic reticulum membrane</location>
        <topology evidence="1">Multi-pass membrane protein</topology>
    </subcellularLocation>
</comment>
<comment type="similarity">
    <text evidence="3">Belongs to the diacylglycerol acyltransferase family.</text>
</comment>
<proteinExistence type="evidence at transcript level"/>
<organism>
    <name type="scientific">Xenopus laevis</name>
    <name type="common">African clawed frog</name>
    <dbReference type="NCBI Taxonomy" id="8355"/>
    <lineage>
        <taxon>Eukaryota</taxon>
        <taxon>Metazoa</taxon>
        <taxon>Chordata</taxon>
        <taxon>Craniata</taxon>
        <taxon>Vertebrata</taxon>
        <taxon>Euteleostomi</taxon>
        <taxon>Amphibia</taxon>
        <taxon>Batrachia</taxon>
        <taxon>Anura</taxon>
        <taxon>Pipoidea</taxon>
        <taxon>Pipidae</taxon>
        <taxon>Xenopodinae</taxon>
        <taxon>Xenopus</taxon>
        <taxon>Xenopus</taxon>
    </lineage>
</organism>
<feature type="chain" id="PRO_0000249060" description="2-acylglycerol O-acyltransferase 1">
    <location>
        <begin position="1"/>
        <end position="335"/>
    </location>
</feature>
<feature type="transmembrane region" description="Helical" evidence="2">
    <location>
        <begin position="24"/>
        <end position="44"/>
    </location>
</feature>
<feature type="transmembrane region" description="Helical" evidence="2">
    <location>
        <begin position="47"/>
        <end position="67"/>
    </location>
</feature>
<feature type="glycosylation site" description="N-linked (GlcNAc...) asparagine" evidence="2">
    <location>
        <position position="125"/>
    </location>
</feature>
<feature type="glycosylation site" description="N-linked (GlcNAc...) asparagine" evidence="2">
    <location>
        <position position="180"/>
    </location>
</feature>
<feature type="sequence conflict" description="In Ref. 1; AAH45058." evidence="3" ref="1">
    <original>Y</original>
    <variation>H</variation>
    <location>
        <position position="220"/>
    </location>
</feature>
<reference key="1">
    <citation type="submission" date="2005-10" db="EMBL/GenBank/DDBJ databases">
        <authorList>
            <consortium name="NIH - Xenopus Gene Collection (XGC) project"/>
        </authorList>
    </citation>
    <scope>NUCLEOTIDE SEQUENCE [LARGE SCALE MRNA]</scope>
    <source>
        <tissue>Brain</tissue>
        <tissue>Embryo</tissue>
    </source>
</reference>
<dbReference type="EC" id="2.3.1.22" evidence="1"/>
<dbReference type="EMBL" id="BC045058">
    <property type="protein sequence ID" value="AAH45058.1"/>
    <property type="molecule type" value="mRNA"/>
</dbReference>
<dbReference type="EMBL" id="BC106627">
    <property type="protein sequence ID" value="AAI06628.1"/>
    <property type="molecule type" value="mRNA"/>
</dbReference>
<dbReference type="RefSeq" id="NP_001080699.1">
    <property type="nucleotide sequence ID" value="NM_001087230.1"/>
</dbReference>
<dbReference type="GlyCosmos" id="Q3KPP4">
    <property type="glycosylation" value="2 sites, No reported glycans"/>
</dbReference>
<dbReference type="DNASU" id="380391"/>
<dbReference type="GeneID" id="380391"/>
<dbReference type="KEGG" id="xla:380391"/>
<dbReference type="AGR" id="Xenbase:XB-GENE-1004231"/>
<dbReference type="CTD" id="380391"/>
<dbReference type="Xenbase" id="XB-GENE-1004231">
    <property type="gene designation" value="mogat1.L"/>
</dbReference>
<dbReference type="OrthoDB" id="264532at2759"/>
<dbReference type="UniPathway" id="UPA00282"/>
<dbReference type="Proteomes" id="UP000186698">
    <property type="component" value="Chromosome 5L"/>
</dbReference>
<dbReference type="Bgee" id="380391">
    <property type="expression patterns" value="Expressed in stomach and 19 other cell types or tissues"/>
</dbReference>
<dbReference type="GO" id="GO:0005789">
    <property type="term" value="C:endoplasmic reticulum membrane"/>
    <property type="evidence" value="ECO:0000318"/>
    <property type="project" value="GO_Central"/>
</dbReference>
<dbReference type="GO" id="GO:0003846">
    <property type="term" value="F:2-acylglycerol O-acyltransferase activity"/>
    <property type="evidence" value="ECO:0007669"/>
    <property type="project" value="UniProtKB-EC"/>
</dbReference>
<dbReference type="GO" id="GO:0004144">
    <property type="term" value="F:diacylglycerol O-acyltransferase activity"/>
    <property type="evidence" value="ECO:0000318"/>
    <property type="project" value="GO_Central"/>
</dbReference>
<dbReference type="GO" id="GO:0006651">
    <property type="term" value="P:diacylglycerol biosynthetic process"/>
    <property type="evidence" value="ECO:0000318"/>
    <property type="project" value="GO_Central"/>
</dbReference>
<dbReference type="GO" id="GO:0006071">
    <property type="term" value="P:glycerol metabolic process"/>
    <property type="evidence" value="ECO:0007669"/>
    <property type="project" value="UniProtKB-KW"/>
</dbReference>
<dbReference type="GO" id="GO:0019432">
    <property type="term" value="P:triglyceride biosynthetic process"/>
    <property type="evidence" value="ECO:0000318"/>
    <property type="project" value="GO_Central"/>
</dbReference>
<dbReference type="CDD" id="cd07987">
    <property type="entry name" value="LPLAT_MGAT-like"/>
    <property type="match status" value="1"/>
</dbReference>
<dbReference type="InterPro" id="IPR007130">
    <property type="entry name" value="DAGAT"/>
</dbReference>
<dbReference type="PANTHER" id="PTHR12317:SF26">
    <property type="entry name" value="2-ACYLGLYCEROL O-ACYLTRANSFERASE 1"/>
    <property type="match status" value="1"/>
</dbReference>
<dbReference type="PANTHER" id="PTHR12317">
    <property type="entry name" value="DIACYLGLYCEROL O-ACYLTRANSFERASE"/>
    <property type="match status" value="1"/>
</dbReference>
<dbReference type="Pfam" id="PF03982">
    <property type="entry name" value="DAGAT"/>
    <property type="match status" value="1"/>
</dbReference>
<accession>Q3KPP4</accession>
<accession>Q7ZXC3</accession>